<name>MURC_BACAA</name>
<organism>
    <name type="scientific">Bacillus anthracis (strain A0248)</name>
    <dbReference type="NCBI Taxonomy" id="592021"/>
    <lineage>
        <taxon>Bacteria</taxon>
        <taxon>Bacillati</taxon>
        <taxon>Bacillota</taxon>
        <taxon>Bacilli</taxon>
        <taxon>Bacillales</taxon>
        <taxon>Bacillaceae</taxon>
        <taxon>Bacillus</taxon>
        <taxon>Bacillus cereus group</taxon>
    </lineage>
</organism>
<feature type="chain" id="PRO_1000117389" description="UDP-N-acetylmuramate--L-alanine ligase">
    <location>
        <begin position="1"/>
        <end position="436"/>
    </location>
</feature>
<feature type="binding site" evidence="1">
    <location>
        <begin position="108"/>
        <end position="114"/>
    </location>
    <ligand>
        <name>ATP</name>
        <dbReference type="ChEBI" id="CHEBI:30616"/>
    </ligand>
</feature>
<gene>
    <name evidence="1" type="primary">murC</name>
    <name type="ordered locus">BAA_4948</name>
</gene>
<protein>
    <recommendedName>
        <fullName evidence="1">UDP-N-acetylmuramate--L-alanine ligase</fullName>
        <ecNumber evidence="1">6.3.2.8</ecNumber>
    </recommendedName>
    <alternativeName>
        <fullName evidence="1">UDP-N-acetylmuramoyl-L-alanine synthetase</fullName>
    </alternativeName>
</protein>
<dbReference type="EC" id="6.3.2.8" evidence="1"/>
<dbReference type="EMBL" id="CP001598">
    <property type="protein sequence ID" value="ACQ48624.1"/>
    <property type="molecule type" value="Genomic_DNA"/>
</dbReference>
<dbReference type="RefSeq" id="WP_000219465.1">
    <property type="nucleotide sequence ID" value="NC_012659.1"/>
</dbReference>
<dbReference type="SMR" id="C3PBF0"/>
<dbReference type="GeneID" id="45024558"/>
<dbReference type="KEGG" id="bai:BAA_4948"/>
<dbReference type="HOGENOM" id="CLU_028104_1_0_9"/>
<dbReference type="UniPathway" id="UPA00219"/>
<dbReference type="GO" id="GO:0005737">
    <property type="term" value="C:cytoplasm"/>
    <property type="evidence" value="ECO:0007669"/>
    <property type="project" value="UniProtKB-SubCell"/>
</dbReference>
<dbReference type="GO" id="GO:0005524">
    <property type="term" value="F:ATP binding"/>
    <property type="evidence" value="ECO:0007669"/>
    <property type="project" value="UniProtKB-UniRule"/>
</dbReference>
<dbReference type="GO" id="GO:0008763">
    <property type="term" value="F:UDP-N-acetylmuramate-L-alanine ligase activity"/>
    <property type="evidence" value="ECO:0007669"/>
    <property type="project" value="UniProtKB-UniRule"/>
</dbReference>
<dbReference type="GO" id="GO:0051301">
    <property type="term" value="P:cell division"/>
    <property type="evidence" value="ECO:0007669"/>
    <property type="project" value="UniProtKB-KW"/>
</dbReference>
<dbReference type="GO" id="GO:0071555">
    <property type="term" value="P:cell wall organization"/>
    <property type="evidence" value="ECO:0007669"/>
    <property type="project" value="UniProtKB-KW"/>
</dbReference>
<dbReference type="GO" id="GO:0009252">
    <property type="term" value="P:peptidoglycan biosynthetic process"/>
    <property type="evidence" value="ECO:0007669"/>
    <property type="project" value="UniProtKB-UniRule"/>
</dbReference>
<dbReference type="GO" id="GO:0008360">
    <property type="term" value="P:regulation of cell shape"/>
    <property type="evidence" value="ECO:0007669"/>
    <property type="project" value="UniProtKB-KW"/>
</dbReference>
<dbReference type="Gene3D" id="3.90.190.20">
    <property type="entry name" value="Mur ligase, C-terminal domain"/>
    <property type="match status" value="1"/>
</dbReference>
<dbReference type="Gene3D" id="3.40.1190.10">
    <property type="entry name" value="Mur-like, catalytic domain"/>
    <property type="match status" value="1"/>
</dbReference>
<dbReference type="Gene3D" id="3.40.50.720">
    <property type="entry name" value="NAD(P)-binding Rossmann-like Domain"/>
    <property type="match status" value="1"/>
</dbReference>
<dbReference type="HAMAP" id="MF_00046">
    <property type="entry name" value="MurC"/>
    <property type="match status" value="1"/>
</dbReference>
<dbReference type="InterPro" id="IPR036565">
    <property type="entry name" value="Mur-like_cat_sf"/>
</dbReference>
<dbReference type="InterPro" id="IPR004101">
    <property type="entry name" value="Mur_ligase_C"/>
</dbReference>
<dbReference type="InterPro" id="IPR036615">
    <property type="entry name" value="Mur_ligase_C_dom_sf"/>
</dbReference>
<dbReference type="InterPro" id="IPR013221">
    <property type="entry name" value="Mur_ligase_cen"/>
</dbReference>
<dbReference type="InterPro" id="IPR000713">
    <property type="entry name" value="Mur_ligase_N"/>
</dbReference>
<dbReference type="InterPro" id="IPR050061">
    <property type="entry name" value="MurCDEF_pg_biosynth"/>
</dbReference>
<dbReference type="InterPro" id="IPR005758">
    <property type="entry name" value="UDP-N-AcMur_Ala_ligase_MurC"/>
</dbReference>
<dbReference type="NCBIfam" id="TIGR01082">
    <property type="entry name" value="murC"/>
    <property type="match status" value="1"/>
</dbReference>
<dbReference type="PANTHER" id="PTHR43445:SF3">
    <property type="entry name" value="UDP-N-ACETYLMURAMATE--L-ALANINE LIGASE"/>
    <property type="match status" value="1"/>
</dbReference>
<dbReference type="PANTHER" id="PTHR43445">
    <property type="entry name" value="UDP-N-ACETYLMURAMATE--L-ALANINE LIGASE-RELATED"/>
    <property type="match status" value="1"/>
</dbReference>
<dbReference type="Pfam" id="PF01225">
    <property type="entry name" value="Mur_ligase"/>
    <property type="match status" value="1"/>
</dbReference>
<dbReference type="Pfam" id="PF02875">
    <property type="entry name" value="Mur_ligase_C"/>
    <property type="match status" value="1"/>
</dbReference>
<dbReference type="Pfam" id="PF08245">
    <property type="entry name" value="Mur_ligase_M"/>
    <property type="match status" value="1"/>
</dbReference>
<dbReference type="SUPFAM" id="SSF51984">
    <property type="entry name" value="MurCD N-terminal domain"/>
    <property type="match status" value="1"/>
</dbReference>
<dbReference type="SUPFAM" id="SSF53623">
    <property type="entry name" value="MurD-like peptide ligases, catalytic domain"/>
    <property type="match status" value="1"/>
</dbReference>
<dbReference type="SUPFAM" id="SSF53244">
    <property type="entry name" value="MurD-like peptide ligases, peptide-binding domain"/>
    <property type="match status" value="1"/>
</dbReference>
<accession>C3PBF0</accession>
<keyword id="KW-0067">ATP-binding</keyword>
<keyword id="KW-0131">Cell cycle</keyword>
<keyword id="KW-0132">Cell division</keyword>
<keyword id="KW-0133">Cell shape</keyword>
<keyword id="KW-0961">Cell wall biogenesis/degradation</keyword>
<keyword id="KW-0963">Cytoplasm</keyword>
<keyword id="KW-0436">Ligase</keyword>
<keyword id="KW-0547">Nucleotide-binding</keyword>
<keyword id="KW-0573">Peptidoglycan synthesis</keyword>
<sequence>MTVYHFVGIKGTGMSSLAQILHDMKHTVQGSDYEKRFFTQTALEKRNISILPFDKSNVKEGQVIIAGNAFPDTHEEIVAAKELNIPVHRYHHFLGDLMNQYTSVAVTGAHGKTSTTGLLAHVMQGAHPTSYLIGDGTGHGVENSKYFVFEACEYRRHFLSYNPDYAIMTNIDFDHPDYFTDINDVFSAFQEMALQVKKGIIACGDDEELQKIQAKVPVIFYGFGEDNDFQARNIQKRTDGTIFDVFVRNTYYDTFKITGYGNHSVLNALAVIALCHYENVDVEAVKHQLTTFEGVKRRFNEKPMGEQVIIDDYAHHPTEINATIEAARQKHPEREIVAVFQPHTFSRTEKFLDEFAESLSKADQVYLCDIFGSARENKGELTIEDLQKRIDGAELITDTTTDVLKKHKNGVLIFMGAGDIQKFEAAYVKEVQVAEK</sequence>
<comment type="function">
    <text evidence="1">Cell wall formation.</text>
</comment>
<comment type="catalytic activity">
    <reaction evidence="1">
        <text>UDP-N-acetyl-alpha-D-muramate + L-alanine + ATP = UDP-N-acetyl-alpha-D-muramoyl-L-alanine + ADP + phosphate + H(+)</text>
        <dbReference type="Rhea" id="RHEA:23372"/>
        <dbReference type="ChEBI" id="CHEBI:15378"/>
        <dbReference type="ChEBI" id="CHEBI:30616"/>
        <dbReference type="ChEBI" id="CHEBI:43474"/>
        <dbReference type="ChEBI" id="CHEBI:57972"/>
        <dbReference type="ChEBI" id="CHEBI:70757"/>
        <dbReference type="ChEBI" id="CHEBI:83898"/>
        <dbReference type="ChEBI" id="CHEBI:456216"/>
        <dbReference type="EC" id="6.3.2.8"/>
    </reaction>
</comment>
<comment type="pathway">
    <text evidence="1">Cell wall biogenesis; peptidoglycan biosynthesis.</text>
</comment>
<comment type="subcellular location">
    <subcellularLocation>
        <location evidence="1">Cytoplasm</location>
    </subcellularLocation>
</comment>
<comment type="similarity">
    <text evidence="1">Belongs to the MurCDEF family.</text>
</comment>
<evidence type="ECO:0000255" key="1">
    <source>
        <dbReference type="HAMAP-Rule" id="MF_00046"/>
    </source>
</evidence>
<reference key="1">
    <citation type="submission" date="2009-04" db="EMBL/GenBank/DDBJ databases">
        <title>Genome sequence of Bacillus anthracis A0248.</title>
        <authorList>
            <person name="Dodson R.J."/>
            <person name="Munk A.C."/>
            <person name="Bruce D."/>
            <person name="Detter C."/>
            <person name="Tapia R."/>
            <person name="Sutton G."/>
            <person name="Sims D."/>
            <person name="Brettin T."/>
        </authorList>
    </citation>
    <scope>NUCLEOTIDE SEQUENCE [LARGE SCALE GENOMIC DNA]</scope>
    <source>
        <strain>A0248</strain>
    </source>
</reference>
<proteinExistence type="inferred from homology"/>